<comment type="function">
    <text evidence="6 8 9 10 11 12 13 16 17 18 19 20 21">ATP-dependent chaperone which probably uses the energy provided by ATP hydrolysis to generate mechanical force to unfold substrate proteins, disassemble protein complexes, and disaggregate protein aggregates (PubMed:18782221, PubMed:22768338). However, able to prevent aggregation of unfolded proteins also in an ATP-independent manner (PubMed:18782221). Targets polyubiquitinated proteins for proteasomal degradation by binding to 'Lys-48'-linked polyubiquitin chains (PubMed:19545544). Involved in the cytoplasmic elimination of misfolded proteins exported from the ER (PubMed:16647269, PubMed:17825049, PubMed:21317884, PubMed:22768338, PubMed:25652260). This pathway, known as ERAD, prevents the activation of the unfolded protein response (UPR) caused by the accumulation of misfolded proteins in the ER (PubMed:16647269, PubMed:17825049, PubMed:21317884, PubMed:22768338, PubMed:25652260). Together with udf-2 and chn-1, regulates myosin assembly in body wall muscles by targeting myosin chaperone unc-45 for proteasomal degradation (PubMed:17369820). During oocyte meiosis and together with cdc-48.1, required for chromosome condensation at the diakinesis phase in prophase I and for progression of metaphase I (PubMed:17512499). During the first embryonic cell division, regulates DNA replication and thus chromosome segregation and decondensation, and nuclear envelope re-assembly (PubMed:18097415, PubMed:18728180, PubMed:21981920, PubMed:26842564). In S phase and in association with ufd-1, npl-4.1 and/or npl-4.2 and ubxn-3, ensures the degradation of DNA licensing factor cdt-1 after the initiation of DNA replication and thus the disassembly of the DNA replication CMG helicase complex by promoting the dissociation from chromatin of several of its components including cdc-45 and sld-5 (PubMed:21981920, PubMed:26842564). Regulates ubxn-3 nuclear localization during S phase (PubMed:26842564). During the first embryonic cell divisions and together with cdc-48.1, regulates the re-assembly of the nuclear envelope after mitosis possibly by inactivating kinase air-2, a component of the chromosomal passenger complex (CPC) (PubMed:18097415).</text>
</comment>
<comment type="catalytic activity">
    <reaction evidence="13">
        <text>ATP + H2O = ADP + phosphate + H(+)</text>
        <dbReference type="Rhea" id="RHEA:13065"/>
        <dbReference type="ChEBI" id="CHEBI:15377"/>
        <dbReference type="ChEBI" id="CHEBI:15378"/>
        <dbReference type="ChEBI" id="CHEBI:30616"/>
        <dbReference type="ChEBI" id="CHEBI:43474"/>
        <dbReference type="ChEBI" id="CHEBI:456216"/>
        <dbReference type="EC" id="3.6.4.6"/>
    </reaction>
</comment>
<comment type="activity regulation">
    <text evidence="1 13">The first ATP-binding region has low ATPase activity (By similarity). The second ATP-binding region is responsible for ATPase activity (By similarity). ATP binding to the first ATP-binding region induces intrinsic activity of the second ATP-binding region (By similarity). While ATP binding to the first ATP-binding region appears to prevent ATP hydrolysis by the second ATP-binding region, ADP-binding to first region promotes the coordinate and cooperative ATPase cycle of the second ATP-binding region (By similarity). ATP binding to the first ATP-binding region induces a conformational change, promoting the rotation of the first ATP-binding region relative to the second ATP-binding region in the hexamer (By similarity). Inhibited by N-ethylmaleimide (NEM) (PubMed:18782221).</text>
</comment>
<comment type="subunit">
    <text evidence="1 6 8 13 14 15 16 19 21">Homohexamer; oligomerization is ATP-independent (PubMed:18782221). Forms a ring-shaped particle of 18.3 nm diameter, that displays 6-fold radial symmetry (By similarity). Interacts with cdc-48.1 and thus may form heterohexamers (PubMed:16647269, PubMed:17369820). Forms a complex composed of ubxn-3, cdc-48.1 and/or cdc-48.2 and substrate cdt-1 (PubMed:26842564). Interacts (via N-terminus) with ubxn-3 (PubMed:20977550). Interacts (via N-terminus) with atx-3 (via RRDR motif) (PubMed:19545544, PubMed:21317884). Interacts (via N-terminus) with ubxn-5 (PubMed:19545544). Interacts with ufd-1 (PubMed:16647269). Interacts (via DDDLYN motif) with ufd-2 (PubMed:17369820, PubMed:21317884). Interacts (via N-terminus) with ubxn-1 (PubMed:16647269, PubMed:20977550). Interacts (via N-terminus) with ubxn-2 (PubMed:20977550, PubMed:23649807). Interacts (via N-terminus) with ubxn-4 (PubMed:20977550). Interacts with ubxn-6 (PubMed:20977550).</text>
</comment>
<comment type="interaction">
    <interactant intactId="EBI-320265">
        <id>P54812</id>
    </interactant>
    <interactant intactId="EBI-320650">
        <id>O17850</id>
        <label>atx-3</label>
    </interactant>
    <organismsDiffer>false</organismsDiffer>
    <experiments>3</experiments>
</comment>
<comment type="interaction">
    <interactant intactId="EBI-320265">
        <id>P54812</id>
    </interactant>
    <interactant intactId="EBI-320245">
        <id>P54811</id>
        <label>cdc-48.1</label>
    </interactant>
    <organismsDiffer>false</organismsDiffer>
    <experiments>6</experiments>
</comment>
<comment type="interaction">
    <interactant intactId="EBI-320265">
        <id>P54812</id>
    </interactant>
    <interactant intactId="EBI-320265">
        <id>P54812</id>
        <label>cdc-48.2</label>
    </interactant>
    <organismsDiffer>false</organismsDiffer>
    <experiments>3</experiments>
</comment>
<comment type="subcellular location">
    <subcellularLocation>
        <location evidence="8">Cytoplasm</location>
    </subcellularLocation>
</comment>
<comment type="tissue specificity">
    <text evidence="8">Expressed in body wall muscles.</text>
</comment>
<comment type="developmental stage">
    <text evidence="7 8">Predominantly expressed in embryos (at protein level) (PubMed:16701565). Expression transiently increases at the L2 larval stage (PubMed:17369820).</text>
</comment>
<comment type="induction">
    <text evidence="7">Induced upon ER stress. Repressed by starvation and oxidative stress.</text>
</comment>
<comment type="disruption phenotype">
    <text evidence="5 6 8 9 10 11 12 15 16 17 18 19 21">RNAi-mediated knockdown causes embryonic lethality in 30-50 percent of embryos (PubMed:15716356). RNAi-mediated knockdown prevents ubxn-2 nuclear localization in the 2-cell embryo (PubMed:23649807). RNAi-mediated knockdown in an unc-45 (m94) mutant background, does not restore motility (PubMed:17369820). Simultaneous RNAi-mediated knockdown of cdc-48.1 causes embryonic lethality (PubMed:15716356, PubMed:16647269, PubMed:18097415, PubMed:18728180, PubMed:26842564). Defects in oocyte meiosis I progression (PubMed:17512499). Defects in embryo S phase DNA replication causing delays in cell cycle progression (PubMed:17512499, PubMed:18097415, PubMed:18728180, PubMed:21981920). At the end of mitosis, impairs chromatin decondensation and nuclear envelope re-assembly (PubMed:18097415, PubMed:18728180). In addition, abnormal accumulation of air-2 on mitotic chromatin and impaired air-2 activation (PubMed:18097415). Does not affect ER transition into sheet-like structures at the onset of embryonic mitosis (PubMed:15716356). Simultaneous RNAi-mediated knockdown of cdc-48.2 in young adults decreases lifespan, induces the unfolded protein response, increases overall levels of polyubiquitinated proteins, and impairs the degradation of misfolded ER proteins (PubMed:16647269, PubMed:17369820, PubMed:17825049, PubMed:21317884, PubMed:22768338). Causes defects in germline development (PubMed:20977550).</text>
</comment>
<comment type="similarity">
    <text evidence="22">Belongs to the AAA ATPase family. CDC48 subfamily.</text>
</comment>
<sequence>MASVPTQRDEKEKKNDELATAILKDKKRPNRLIIDQSDNDDNSMVMLSQAKMDELGLFRGDSVILKGKKRRETVSIVLNADNCPNDKIKMNKVVRNNLRSRLGDVVSISSAQLEYGKRVHVLPIDDTIEGLTGNLFDVFLRPYFTDAYRPVHKGDIFTVQAAMRTVEFKVVETDPAPACIVAPDTVIHYEGDPIKREEEEEALNEVGYDDLGGVRKQLAQIKEMVELPLRHPQLFKAIGVKPPRGILLFGPPGTGKTLIARAVANETGAFFFLINGPEIMSKMSGESESNLRKAFAECEKNSPAILFIDEIDAIAPKREKAHGEVEKRIVSQLLTLMDGLKTRAHVVVIAATNRPNSIDGALRRFGRFDREIDIGIPDAVGRLEILRIHTKNMKLGEDVDLEQVANECHGFVGADLASLCSEAAIQQIREKMELIDLEDDTIDAEVLNSLAVTMENFRFAMGKSSPSALREAVVETPNTTWSDIGGLQNVKRELQELVQYPVEHPEKYLKFGMQPSRGVLFYGPPGCGKTLLAKAIANECQANFISIKGPELLTMWFGESEANVRDVFDKARAAAPCVLFFDELDSIAKARGGSVGDAGGAADRVINQVLTEMDGMNAKKNVFIIGATNRPDIIDPAVLRPGRLDQLIYIPLPDEASRLQIFKASLRKTPLSADLDLNFLAKNTVGFSGADLTEICQRACKLAIRESIEREIRQEKERQDRSARGEELMEDELADPVPEITRAHFEEAMKFARRSVTDNDIRKYEMFAQTLQQSRGFGNNFKFPGEAPSAGQPVGGNGGSGGNDDDDLYN</sequence>
<protein>
    <recommendedName>
        <fullName>Transitional endoplasmic reticulum ATPase homolog 2</fullName>
        <ecNumber evidence="13">3.6.4.6</ecNumber>
    </recommendedName>
    <alternativeName>
        <fullName>Cell division cycle-related protein 48.2</fullName>
    </alternativeName>
    <alternativeName>
        <fullName>p97/CDC48 homolog 2</fullName>
    </alternativeName>
</protein>
<accession>P54812</accession>
<accession>Q18560</accession>
<name>TERA2_CAEEL</name>
<dbReference type="EC" id="3.6.4.6" evidence="13"/>
<dbReference type="EMBL" id="Z48045">
    <property type="protein sequence ID" value="CAA88105.1"/>
    <property type="molecule type" value="Genomic_DNA"/>
</dbReference>
<dbReference type="EMBL" id="Z48334">
    <property type="protein sequence ID" value="CAA88105.1"/>
    <property type="status" value="JOINED"/>
    <property type="molecule type" value="Genomic_DNA"/>
</dbReference>
<dbReference type="PIR" id="T19879">
    <property type="entry name" value="T19879"/>
</dbReference>
<dbReference type="RefSeq" id="NP_495705.1">
    <property type="nucleotide sequence ID" value="NM_063304.9"/>
</dbReference>
<dbReference type="SMR" id="P54812"/>
<dbReference type="BioGRID" id="39638">
    <property type="interactions" value="57"/>
</dbReference>
<dbReference type="DIP" id="DIP-26566N"/>
<dbReference type="FunCoup" id="P54812">
    <property type="interactions" value="2664"/>
</dbReference>
<dbReference type="IntAct" id="P54812">
    <property type="interactions" value="6"/>
</dbReference>
<dbReference type="STRING" id="6239.C41C4.8.2"/>
<dbReference type="iPTMnet" id="P54812"/>
<dbReference type="PaxDb" id="6239-C41C4.8.2"/>
<dbReference type="PeptideAtlas" id="P54812"/>
<dbReference type="EnsemblMetazoa" id="C41C4.8.1">
    <property type="protein sequence ID" value="C41C4.8.1"/>
    <property type="gene ID" value="WBGene00008053"/>
</dbReference>
<dbReference type="GeneID" id="174309"/>
<dbReference type="KEGG" id="cel:CELE_C41C4.8"/>
<dbReference type="UCSC" id="C41C4.8.1">
    <property type="organism name" value="c. elegans"/>
</dbReference>
<dbReference type="AGR" id="WB:WBGene00008053"/>
<dbReference type="CTD" id="174309"/>
<dbReference type="WormBase" id="C41C4.8">
    <property type="protein sequence ID" value="CE05402"/>
    <property type="gene ID" value="WBGene00008053"/>
    <property type="gene designation" value="cdc-48.2"/>
</dbReference>
<dbReference type="eggNOG" id="KOG0730">
    <property type="taxonomic scope" value="Eukaryota"/>
</dbReference>
<dbReference type="GeneTree" id="ENSGT00970000196377"/>
<dbReference type="HOGENOM" id="CLU_000688_12_0_1"/>
<dbReference type="InParanoid" id="P54812"/>
<dbReference type="OMA" id="VEMRHFR"/>
<dbReference type="OrthoDB" id="27435at2759"/>
<dbReference type="PhylomeDB" id="P54812"/>
<dbReference type="Reactome" id="R-CEL-110320">
    <property type="pathway name" value="Translesion Synthesis by POLH"/>
</dbReference>
<dbReference type="Reactome" id="R-CEL-3371511">
    <property type="pathway name" value="HSF1 activation"/>
</dbReference>
<dbReference type="Reactome" id="R-CEL-382556">
    <property type="pathway name" value="ABC-family proteins mediated transport"/>
</dbReference>
<dbReference type="Reactome" id="R-CEL-532668">
    <property type="pathway name" value="N-glycan trimming in the ER and Calnexin/Calreticulin cycle"/>
</dbReference>
<dbReference type="Reactome" id="R-CEL-5358346">
    <property type="pathway name" value="Hedgehog ligand biogenesis"/>
</dbReference>
<dbReference type="Reactome" id="R-CEL-5689877">
    <property type="pathway name" value="Josephin domain DUBs"/>
</dbReference>
<dbReference type="Reactome" id="R-CEL-6798695">
    <property type="pathway name" value="Neutrophil degranulation"/>
</dbReference>
<dbReference type="Reactome" id="R-CEL-8876725">
    <property type="pathway name" value="Protein methylation"/>
</dbReference>
<dbReference type="Reactome" id="R-CEL-8951664">
    <property type="pathway name" value="Neddylation"/>
</dbReference>
<dbReference type="Reactome" id="R-CEL-9013407">
    <property type="pathway name" value="RHOH GTPase cycle"/>
</dbReference>
<dbReference type="Reactome" id="R-CEL-9755511">
    <property type="pathway name" value="KEAP1-NFE2L2 pathway"/>
</dbReference>
<dbReference type="PRO" id="PR:P54812"/>
<dbReference type="Proteomes" id="UP000001940">
    <property type="component" value="Chromosome II"/>
</dbReference>
<dbReference type="Bgee" id="WBGene00008053">
    <property type="expression patterns" value="Expressed in adult organism and 4 other cell types or tissues"/>
</dbReference>
<dbReference type="GO" id="GO:0005829">
    <property type="term" value="C:cytosol"/>
    <property type="evidence" value="ECO:0000318"/>
    <property type="project" value="GO_Central"/>
</dbReference>
<dbReference type="GO" id="GO:0005634">
    <property type="term" value="C:nucleus"/>
    <property type="evidence" value="ECO:0000314"/>
    <property type="project" value="WormBase"/>
</dbReference>
<dbReference type="GO" id="GO:0034098">
    <property type="term" value="C:VCP-NPL4-UFD1 AAA ATPase complex"/>
    <property type="evidence" value="ECO:0000353"/>
    <property type="project" value="WormBase"/>
</dbReference>
<dbReference type="GO" id="GO:0005524">
    <property type="term" value="F:ATP binding"/>
    <property type="evidence" value="ECO:0007669"/>
    <property type="project" value="UniProtKB-KW"/>
</dbReference>
<dbReference type="GO" id="GO:0016887">
    <property type="term" value="F:ATP hydrolysis activity"/>
    <property type="evidence" value="ECO:0000314"/>
    <property type="project" value="WormBase"/>
</dbReference>
<dbReference type="GO" id="GO:0042802">
    <property type="term" value="F:identical protein binding"/>
    <property type="evidence" value="ECO:0000353"/>
    <property type="project" value="IntAct"/>
</dbReference>
<dbReference type="GO" id="GO:0031593">
    <property type="term" value="F:polyubiquitin modification-dependent protein binding"/>
    <property type="evidence" value="ECO:0000318"/>
    <property type="project" value="GO_Central"/>
</dbReference>
<dbReference type="GO" id="GO:0097352">
    <property type="term" value="P:autophagosome maturation"/>
    <property type="evidence" value="ECO:0000318"/>
    <property type="project" value="GO_Central"/>
</dbReference>
<dbReference type="GO" id="GO:0009792">
    <property type="term" value="P:embryo development ending in birth or egg hatching"/>
    <property type="evidence" value="ECO:0000316"/>
    <property type="project" value="WormBase"/>
</dbReference>
<dbReference type="GO" id="GO:0036503">
    <property type="term" value="P:ERAD pathway"/>
    <property type="evidence" value="ECO:0000316"/>
    <property type="project" value="WormBase"/>
</dbReference>
<dbReference type="GO" id="GO:0036498">
    <property type="term" value="P:IRE1-mediated unfolded protein response"/>
    <property type="evidence" value="ECO:0007007"/>
    <property type="project" value="WormBase"/>
</dbReference>
<dbReference type="GO" id="GO:0051228">
    <property type="term" value="P:mitotic spindle disassembly"/>
    <property type="evidence" value="ECO:0000318"/>
    <property type="project" value="GO_Central"/>
</dbReference>
<dbReference type="GO" id="GO:1904780">
    <property type="term" value="P:negative regulation of protein localization to centrosome"/>
    <property type="evidence" value="ECO:0000315"/>
    <property type="project" value="UniProtKB"/>
</dbReference>
<dbReference type="GO" id="GO:0043161">
    <property type="term" value="P:proteasome-mediated ubiquitin-dependent protein catabolic process"/>
    <property type="evidence" value="ECO:0000318"/>
    <property type="project" value="GO_Central"/>
</dbReference>
<dbReference type="GO" id="GO:0034504">
    <property type="term" value="P:protein localization to nucleus"/>
    <property type="evidence" value="ECO:0000314"/>
    <property type="project" value="UniProtKB"/>
</dbReference>
<dbReference type="GO" id="GO:0030970">
    <property type="term" value="P:retrograde protein transport, ER to cytosol"/>
    <property type="evidence" value="ECO:0000318"/>
    <property type="project" value="GO_Central"/>
</dbReference>
<dbReference type="CDD" id="cd19519">
    <property type="entry name" value="RecA-like_CDC48_r1-like"/>
    <property type="match status" value="1"/>
</dbReference>
<dbReference type="CDD" id="cd19528">
    <property type="entry name" value="RecA-like_CDC48_r2-like"/>
    <property type="match status" value="1"/>
</dbReference>
<dbReference type="FunFam" id="1.10.8.60:FF:000004">
    <property type="entry name" value="Cell division control 48"/>
    <property type="match status" value="1"/>
</dbReference>
<dbReference type="FunFam" id="3.10.330.10:FF:000001">
    <property type="entry name" value="Cell division control 48"/>
    <property type="match status" value="1"/>
</dbReference>
<dbReference type="FunFam" id="2.40.40.20:FF:000003">
    <property type="entry name" value="Transitional endoplasmic reticulum ATPase"/>
    <property type="match status" value="1"/>
</dbReference>
<dbReference type="FunFam" id="3.40.50.300:FF:000012">
    <property type="entry name" value="Transitional endoplasmic reticulum ATPase"/>
    <property type="match status" value="1"/>
</dbReference>
<dbReference type="FunFam" id="3.40.50.300:FF:000048">
    <property type="entry name" value="Transitional endoplasmic reticulum ATPase"/>
    <property type="match status" value="1"/>
</dbReference>
<dbReference type="Gene3D" id="1.10.8.60">
    <property type="match status" value="1"/>
</dbReference>
<dbReference type="Gene3D" id="2.40.40.20">
    <property type="match status" value="1"/>
</dbReference>
<dbReference type="Gene3D" id="3.10.330.10">
    <property type="match status" value="1"/>
</dbReference>
<dbReference type="Gene3D" id="6.10.20.150">
    <property type="match status" value="1"/>
</dbReference>
<dbReference type="Gene3D" id="3.40.50.300">
    <property type="entry name" value="P-loop containing nucleotide triphosphate hydrolases"/>
    <property type="match status" value="2"/>
</dbReference>
<dbReference type="InterPro" id="IPR003593">
    <property type="entry name" value="AAA+_ATPase"/>
</dbReference>
<dbReference type="InterPro" id="IPR005938">
    <property type="entry name" value="AAA_ATPase_CDC48"/>
</dbReference>
<dbReference type="InterPro" id="IPR050168">
    <property type="entry name" value="AAA_ATPase_domain"/>
</dbReference>
<dbReference type="InterPro" id="IPR041569">
    <property type="entry name" value="AAA_lid_3"/>
</dbReference>
<dbReference type="InterPro" id="IPR009010">
    <property type="entry name" value="Asp_de-COase-like_dom_sf"/>
</dbReference>
<dbReference type="InterPro" id="IPR003959">
    <property type="entry name" value="ATPase_AAA_core"/>
</dbReference>
<dbReference type="InterPro" id="IPR003960">
    <property type="entry name" value="ATPase_AAA_CS"/>
</dbReference>
<dbReference type="InterPro" id="IPR004201">
    <property type="entry name" value="Cdc48_dom2"/>
</dbReference>
<dbReference type="InterPro" id="IPR029067">
    <property type="entry name" value="CDC48_domain_2-like_sf"/>
</dbReference>
<dbReference type="InterPro" id="IPR003338">
    <property type="entry name" value="CDC4_N-term_subdom"/>
</dbReference>
<dbReference type="InterPro" id="IPR027417">
    <property type="entry name" value="P-loop_NTPase"/>
</dbReference>
<dbReference type="InterPro" id="IPR015415">
    <property type="entry name" value="Spast_Vps4_C"/>
</dbReference>
<dbReference type="NCBIfam" id="TIGR01243">
    <property type="entry name" value="CDC48"/>
    <property type="match status" value="1"/>
</dbReference>
<dbReference type="PANTHER" id="PTHR23077">
    <property type="entry name" value="AAA-FAMILY ATPASE"/>
    <property type="match status" value="1"/>
</dbReference>
<dbReference type="PANTHER" id="PTHR23077:SF171">
    <property type="entry name" value="NUCLEAR VALOSIN-CONTAINING PROTEIN-LIKE"/>
    <property type="match status" value="1"/>
</dbReference>
<dbReference type="Pfam" id="PF00004">
    <property type="entry name" value="AAA"/>
    <property type="match status" value="2"/>
</dbReference>
<dbReference type="Pfam" id="PF17862">
    <property type="entry name" value="AAA_lid_3"/>
    <property type="match status" value="2"/>
</dbReference>
<dbReference type="Pfam" id="PF02933">
    <property type="entry name" value="CDC48_2"/>
    <property type="match status" value="1"/>
</dbReference>
<dbReference type="Pfam" id="PF02359">
    <property type="entry name" value="CDC48_N"/>
    <property type="match status" value="1"/>
</dbReference>
<dbReference type="Pfam" id="PF09336">
    <property type="entry name" value="Vps4_C"/>
    <property type="match status" value="1"/>
</dbReference>
<dbReference type="SMART" id="SM00382">
    <property type="entry name" value="AAA"/>
    <property type="match status" value="2"/>
</dbReference>
<dbReference type="SMART" id="SM01072">
    <property type="entry name" value="CDC48_2"/>
    <property type="match status" value="1"/>
</dbReference>
<dbReference type="SMART" id="SM01073">
    <property type="entry name" value="CDC48_N"/>
    <property type="match status" value="1"/>
</dbReference>
<dbReference type="SUPFAM" id="SSF50692">
    <property type="entry name" value="ADC-like"/>
    <property type="match status" value="1"/>
</dbReference>
<dbReference type="SUPFAM" id="SSF54585">
    <property type="entry name" value="Cdc48 domain 2-like"/>
    <property type="match status" value="1"/>
</dbReference>
<dbReference type="SUPFAM" id="SSF52540">
    <property type="entry name" value="P-loop containing nucleoside triphosphate hydrolases"/>
    <property type="match status" value="2"/>
</dbReference>
<dbReference type="PROSITE" id="PS00674">
    <property type="entry name" value="AAA"/>
    <property type="match status" value="2"/>
</dbReference>
<organism>
    <name type="scientific">Caenorhabditis elegans</name>
    <dbReference type="NCBI Taxonomy" id="6239"/>
    <lineage>
        <taxon>Eukaryota</taxon>
        <taxon>Metazoa</taxon>
        <taxon>Ecdysozoa</taxon>
        <taxon>Nematoda</taxon>
        <taxon>Chromadorea</taxon>
        <taxon>Rhabditida</taxon>
        <taxon>Rhabditina</taxon>
        <taxon>Rhabditomorpha</taxon>
        <taxon>Rhabditoidea</taxon>
        <taxon>Rhabditidae</taxon>
        <taxon>Peloderinae</taxon>
        <taxon>Caenorhabditis</taxon>
    </lineage>
</organism>
<feature type="chain" id="PRO_0000084578" description="Transitional endoplasmic reticulum ATPase homolog 2">
    <location>
        <begin position="1"/>
        <end position="810"/>
    </location>
</feature>
<feature type="region of interest" description="Disordered" evidence="4">
    <location>
        <begin position="713"/>
        <end position="732"/>
    </location>
</feature>
<feature type="region of interest" description="Disordered" evidence="4">
    <location>
        <begin position="777"/>
        <end position="810"/>
    </location>
</feature>
<feature type="region of interest" description="Interaction with ufd-2" evidence="8 16">
    <location>
        <begin position="805"/>
        <end position="810"/>
    </location>
</feature>
<feature type="compositionally biased region" description="Basic and acidic residues" evidence="4">
    <location>
        <begin position="713"/>
        <end position="727"/>
    </location>
</feature>
<feature type="compositionally biased region" description="Gly residues" evidence="4">
    <location>
        <begin position="793"/>
        <end position="802"/>
    </location>
</feature>
<feature type="binding site" evidence="2">
    <location>
        <begin position="252"/>
        <end position="258"/>
    </location>
    <ligand>
        <name>ATP</name>
        <dbReference type="ChEBI" id="CHEBI:30616"/>
        <label>1</label>
    </ligand>
</feature>
<feature type="binding site" evidence="2">
    <location>
        <position position="353"/>
    </location>
    <ligand>
        <name>ATP</name>
        <dbReference type="ChEBI" id="CHEBI:30616"/>
        <label>1</label>
    </ligand>
</feature>
<feature type="binding site" evidence="2">
    <location>
        <position position="389"/>
    </location>
    <ligand>
        <name>ATP</name>
        <dbReference type="ChEBI" id="CHEBI:30616"/>
        <label>1</label>
    </ligand>
</feature>
<feature type="binding site" evidence="3">
    <location>
        <begin position="526"/>
        <end position="531"/>
    </location>
    <ligand>
        <name>ATP</name>
        <dbReference type="ChEBI" id="CHEBI:30616"/>
        <label>2</label>
    </ligand>
</feature>
<feature type="mutagenesis site" description="Loss of catalytic activity without affecting oligomerization; when associated with A-529." evidence="13">
    <original>K</original>
    <variation>A</variation>
    <location>
        <position position="256"/>
    </location>
</feature>
<feature type="mutagenesis site" description="Loss of catalytic activity without affecting oligomerization; when associated with A-256." evidence="13">
    <original>K</original>
    <variation>A</variation>
    <location>
        <position position="529"/>
    </location>
</feature>
<feature type="mutagenesis site" description="Loss of interaction with ufd-2 but not with atx-3." evidence="8 16">
    <location>
        <begin position="805"/>
        <end position="810"/>
    </location>
</feature>
<evidence type="ECO:0000250" key="1">
    <source>
        <dbReference type="UniProtKB" id="P54811"/>
    </source>
</evidence>
<evidence type="ECO:0000250" key="2">
    <source>
        <dbReference type="UniProtKB" id="P55072"/>
    </source>
</evidence>
<evidence type="ECO:0000250" key="3">
    <source>
        <dbReference type="UniProtKB" id="Q01853"/>
    </source>
</evidence>
<evidence type="ECO:0000256" key="4">
    <source>
        <dbReference type="SAM" id="MobiDB-lite"/>
    </source>
</evidence>
<evidence type="ECO:0000269" key="5">
    <source>
    </source>
</evidence>
<evidence type="ECO:0000269" key="6">
    <source>
    </source>
</evidence>
<evidence type="ECO:0000269" key="7">
    <source>
    </source>
</evidence>
<evidence type="ECO:0000269" key="8">
    <source>
    </source>
</evidence>
<evidence type="ECO:0000269" key="9">
    <source>
    </source>
</evidence>
<evidence type="ECO:0000269" key="10">
    <source>
    </source>
</evidence>
<evidence type="ECO:0000269" key="11">
    <source>
    </source>
</evidence>
<evidence type="ECO:0000269" key="12">
    <source>
    </source>
</evidence>
<evidence type="ECO:0000269" key="13">
    <source>
    </source>
</evidence>
<evidence type="ECO:0000269" key="14">
    <source>
    </source>
</evidence>
<evidence type="ECO:0000269" key="15">
    <source>
    </source>
</evidence>
<evidence type="ECO:0000269" key="16">
    <source>
    </source>
</evidence>
<evidence type="ECO:0000269" key="17">
    <source>
    </source>
</evidence>
<evidence type="ECO:0000269" key="18">
    <source>
    </source>
</evidence>
<evidence type="ECO:0000269" key="19">
    <source>
    </source>
</evidence>
<evidence type="ECO:0000269" key="20">
    <source>
    </source>
</evidence>
<evidence type="ECO:0000269" key="21">
    <source>
    </source>
</evidence>
<evidence type="ECO:0000305" key="22"/>
<reference key="1">
    <citation type="journal article" date="1998" name="Science">
        <title>Genome sequence of the nematode C. elegans: a platform for investigating biology.</title>
        <authorList>
            <consortium name="The C. elegans sequencing consortium"/>
        </authorList>
    </citation>
    <scope>NUCLEOTIDE SEQUENCE [LARGE SCALE GENOMIC DNA]</scope>
    <source>
        <strain>Bristol N2</strain>
    </source>
</reference>
<reference key="2">
    <citation type="journal article" date="2005" name="Mol. Biol. Cell">
        <title>Involvement of the actin cytoskeleton and homotypic membrane fusion in ER dynamics in Caenorhabditis elegans.</title>
        <authorList>
            <person name="Poteryaev D."/>
            <person name="Squirrell J.M."/>
            <person name="Campbell J.M."/>
            <person name="White J.G."/>
            <person name="Spang A."/>
        </authorList>
    </citation>
    <scope>DISRUPTION PHENOTYPE</scope>
</reference>
<reference key="3">
    <citation type="journal article" date="2006" name="Biochem. Biophys. Res. Commun.">
        <title>Comparative analysis of expression of two p97 homologues in Caenorhabditis elegans.</title>
        <authorList>
            <person name="Yamauchi S."/>
            <person name="Yamanaka K."/>
            <person name="Ogura T."/>
        </authorList>
    </citation>
    <scope>DEVELOPMENTAL STAGE</scope>
    <scope>INDUCTION</scope>
</reference>
<reference key="4">
    <citation type="journal article" date="2006" name="J. Struct. Biol.">
        <title>A conserved role of Caenorhabditis elegans CDC-48 in ER-associated protein degradation.</title>
        <authorList>
            <person name="Mouysset J."/>
            <person name="Kaehler C."/>
            <person name="Hoppe T."/>
        </authorList>
    </citation>
    <scope>FUNCTION</scope>
    <scope>INTERACTION WITH CDC-48.1; UFD-1 AND UBXN-1</scope>
    <scope>DISRUPTION PHENOTYPE</scope>
</reference>
<reference key="5">
    <citation type="journal article" date="2007" name="Biochem. Biophys. Res. Commun.">
        <title>Caenorhabditis elegans p97/CDC-48 is crucial for progression of meiosis I.</title>
        <authorList>
            <person name="Sasagawa Y."/>
            <person name="Yamanaka K."/>
            <person name="Nishikori S."/>
            <person name="Ogura T."/>
        </authorList>
    </citation>
    <scope>FUNCTION</scope>
    <scope>DISRUPTION PHENOTYPE</scope>
</reference>
<reference key="6">
    <citation type="journal article" date="2007" name="Genes Cells">
        <title>ER E3 ubiquitin ligase HRD-1 and its specific partner chaperone BiP play important roles in ERAD and developmental growth in Caenorhabditis elegans.</title>
        <authorList>
            <person name="Sasagawa Y."/>
            <person name="Yamanaka K."/>
            <person name="Ogura T."/>
        </authorList>
    </citation>
    <scope>FUNCTION</scope>
    <scope>DISRUPTION PHENOTYPE</scope>
</reference>
<reference key="7">
    <citation type="journal article" date="2007" name="Nature">
        <title>Cdc48/p97 promotes reformation of the nucleus by extracting the kinase Aurora B from chromatin.</title>
        <authorList>
            <person name="Ramadan K."/>
            <person name="Bruderer R."/>
            <person name="Spiga F.M."/>
            <person name="Popp O."/>
            <person name="Baur T."/>
            <person name="Gotta M."/>
            <person name="Meyer H.H."/>
        </authorList>
    </citation>
    <scope>FUNCTION</scope>
    <scope>DISRUPTION PHENOTYPE</scope>
</reference>
<reference key="8">
    <citation type="journal article" date="2007" name="Nat. Cell Biol.">
        <title>The ubiquitin-selective chaperone CDC-48/p97 links myosin assembly to human myopathy.</title>
        <authorList>
            <person name="Janiesch P.C."/>
            <person name="Kim J."/>
            <person name="Mouysset J."/>
            <person name="Barikbin R."/>
            <person name="Lochmueller H."/>
            <person name="Cassata G."/>
            <person name="Krause S."/>
            <person name="Hoppe T."/>
        </authorList>
    </citation>
    <scope>FUNCTION</scope>
    <scope>INTERACTION WITH CDC-48.1 AND UFD-2</scope>
    <scope>SUBCELLULAR LOCATION</scope>
    <scope>TISSUE SPECIFICITY</scope>
    <scope>DEVELOPMENTAL STAGE</scope>
    <scope>DISRUPTION PHENOTYPE</scope>
    <scope>MUTAGENESIS OF 805-ASP--ASN-810</scope>
</reference>
<reference key="9">
    <citation type="journal article" date="2008" name="Genes Cells">
        <title>p97 Homologs from Caenorhabditis elegans, CDC-48.1 and CDC-48.2, suppress the aggregate formation of huntingtin exon1 containing expanded polyQ repeat.</title>
        <authorList>
            <person name="Nishikori S."/>
            <person name="Yamanaka K."/>
            <person name="Sakurai T."/>
            <person name="Esaki M."/>
            <person name="Ogura T."/>
        </authorList>
    </citation>
    <scope>FUNCTION</scope>
    <scope>CATALYTIC ACTIVITY</scope>
    <scope>ACTIVITY REGULATION</scope>
    <scope>SUBUNIT</scope>
    <scope>MUTAGENESIS OF LYS-256 AND LYS-529</scope>
</reference>
<reference key="10">
    <citation type="journal article" date="2008" name="Proc. Natl. Acad. Sci. U.S.A.">
        <title>Cell cycle progression requires the CDC-48UFD-1/NPL-4 complex for efficient DNA replication.</title>
        <authorList>
            <person name="Mouysset J."/>
            <person name="Deichsel A."/>
            <person name="Moser S."/>
            <person name="Hoege C."/>
            <person name="Hyman A.A."/>
            <person name="Gartner A."/>
            <person name="Hoppe T."/>
        </authorList>
    </citation>
    <scope>FUNCTION</scope>
    <scope>DISRUPTION PHENOTYPE</scope>
</reference>
<reference key="11">
    <citation type="journal article" date="2009" name="Biochem. Biophys. Res. Commun.">
        <title>ATX-3, CDC-48 and UBXN-5: a new trimolecular complex in Caenorhabditis elegans.</title>
        <authorList>
            <person name="Rodrigues A.J."/>
            <person name="Neves-Carvalho A."/>
            <person name="Ferro A."/>
            <person name="Rokka A."/>
            <person name="Corthals G."/>
            <person name="Logarinho E."/>
            <person name="Maciel P."/>
        </authorList>
    </citation>
    <scope>INTERACTION WITH ATX-3 AND UBXN-5</scope>
</reference>
<reference key="12">
    <citation type="journal article" date="2010" name="Genes Cells">
        <title>Caenorhabditis elegans UBX cofactors for CDC-48/p97 control spermatogenesis.</title>
        <authorList>
            <person name="Sasagawa Y."/>
            <person name="Yamanaka K."/>
            <person name="Saito-Sasagawa Y."/>
            <person name="Ogura T."/>
        </authorList>
    </citation>
    <scope>INTERACTION WITH UBXN-1; UBXN-2; UBXN-3; UBXN-4; UBXN-6 AND UFD-1</scope>
    <scope>DISRUPTION PHENOTYPE</scope>
</reference>
<reference key="13">
    <citation type="journal article" date="2011" name="Mol. Cell">
        <title>CDC-48/p97 coordinates CDT-1 degradation with GINS chromatin dissociation to ensure faithful DNA replication.</title>
        <authorList>
            <person name="Franz A."/>
            <person name="Orth M."/>
            <person name="Pirson P.A."/>
            <person name="Sonneville R."/>
            <person name="Blow J.J."/>
            <person name="Gartner A."/>
            <person name="Stemmann O."/>
            <person name="Hoppe T."/>
        </authorList>
    </citation>
    <scope>FUNCTION</scope>
    <scope>DISRUPTION PHENOTYPE</scope>
</reference>
<reference key="14">
    <citation type="journal article" date="2011" name="Nat. Cell Biol.">
        <title>The Machado-Joseph disease deubiquitylase ATX-3 couples longevity and proteostasis.</title>
        <authorList>
            <person name="Kuhlbrodt K."/>
            <person name="Janiesch P.C."/>
            <person name="Kevei E."/>
            <person name="Segref A."/>
            <person name="Barikbin R."/>
            <person name="Hoppe T."/>
        </authorList>
    </citation>
    <scope>FUNCTION</scope>
    <scope>INTERACTION WITH ATX-3 AND UFD-2</scope>
    <scope>DISRUPTION PHENOTYPE</scope>
    <scope>MUTAGENESIS OF 805-ASP--ASN-810</scope>
</reference>
<reference key="15">
    <citation type="journal article" date="2012" name="PLoS ONE">
        <title>A pro-cathepsin L mutant is a luminal substrate for endoplasmic-reticulum-associated degradation in C. elegans.</title>
        <authorList>
            <person name="Miedel M.T."/>
            <person name="Graf N.J."/>
            <person name="Stephen K.E."/>
            <person name="Long O.S."/>
            <person name="Pak S.C."/>
            <person name="Perlmutter D.H."/>
            <person name="Silverman G.A."/>
            <person name="Luke C.J."/>
        </authorList>
    </citation>
    <scope>FUNCTION</scope>
    <scope>DISRUPTION PHENOTYPE</scope>
</reference>
<reference key="16">
    <citation type="journal article" date="2013" name="J. Cell Biol.">
        <title>The UBXN-2/p37/p47 adaptors of CDC-48/p97 regulate mitosis by limiting the centrosomal recruitment of Aurora A.</title>
        <authorList>
            <person name="Kress E."/>
            <person name="Schwager F."/>
            <person name="Holtackers R."/>
            <person name="Seiler J."/>
            <person name="Prodon F."/>
            <person name="Zanin E."/>
            <person name="Eiteneuer A."/>
            <person name="Toya M."/>
            <person name="Sugimoto A."/>
            <person name="Meyer H."/>
            <person name="Meraldi P."/>
            <person name="Gotta M."/>
        </authorList>
    </citation>
    <scope>FUNCTION</scope>
    <scope>INTERACTION WITH UBXN-2</scope>
    <scope>DISRUPTION PHENOTYPE</scope>
</reference>
<reference key="17">
    <citation type="journal article" date="2015" name="EMBO Rep.">
        <title>Genome-wide screen identifies a novel p97/CDC-48-dependent pathway regulating ER-stress-induced gene transcription.</title>
        <authorList>
            <person name="Marza E."/>
            <person name="Taouji S."/>
            <person name="Barroso K."/>
            <person name="Raymond A.A."/>
            <person name="Guignard L."/>
            <person name="Bonneu M."/>
            <person name="Pallares-Lupon N."/>
            <person name="Dupuy J.W."/>
            <person name="Fernandez-Zapico M.E."/>
            <person name="Rosenbaum J."/>
            <person name="Palladino F."/>
            <person name="Dupuy D."/>
            <person name="Chevet E."/>
        </authorList>
    </citation>
    <scope>FUNCTION</scope>
</reference>
<reference key="18">
    <citation type="journal article" date="2016" name="Nat. Commun.">
        <title>Chromatin-associated degradation is defined by UBXN-3/FAF1 to safeguard DNA replication fork progression.</title>
        <authorList>
            <person name="Franz A."/>
            <person name="Pirson P.A."/>
            <person name="Pilger D."/>
            <person name="Halder S."/>
            <person name="Achuthankutty D."/>
            <person name="Kashkar H."/>
            <person name="Ramadan K."/>
            <person name="Hoppe T."/>
        </authorList>
    </citation>
    <scope>FUNCTION</scope>
    <scope>IDENTIFICATION IN A COMPLEX WITH UBXN-3 AND CDT-1</scope>
    <scope>INTERACTION WITH UBXN-3 AND CDT-1</scope>
    <scope>DISRUPTION PHENOTYPE</scope>
</reference>
<gene>
    <name type="primary">cdc-48.2</name>
    <name type="ORF">C41C4.8</name>
</gene>
<keyword id="KW-0067">ATP-binding</keyword>
<keyword id="KW-0143">Chaperone</keyword>
<keyword id="KW-0963">Cytoplasm</keyword>
<keyword id="KW-0378">Hydrolase</keyword>
<keyword id="KW-0547">Nucleotide-binding</keyword>
<keyword id="KW-1185">Reference proteome</keyword>
<keyword id="KW-0677">Repeat</keyword>
<proteinExistence type="evidence at protein level"/>